<keyword id="KW-0285">Flavoprotein</keyword>
<keyword id="KW-0288">FMN</keyword>
<keyword id="KW-0520">NAD</keyword>
<keyword id="KW-0521">NADP</keyword>
<keyword id="KW-0547">Nucleotide-binding</keyword>
<keyword id="KW-0560">Oxidoreductase</keyword>
<dbReference type="EC" id="1.6.5.2" evidence="1"/>
<dbReference type="EMBL" id="CP000109">
    <property type="protein sequence ID" value="ABB41605.1"/>
    <property type="molecule type" value="Genomic_DNA"/>
</dbReference>
<dbReference type="SMR" id="Q31GW8"/>
<dbReference type="STRING" id="317025.Tcr_1010"/>
<dbReference type="KEGG" id="tcx:Tcr_1010"/>
<dbReference type="eggNOG" id="COG0655">
    <property type="taxonomic scope" value="Bacteria"/>
</dbReference>
<dbReference type="HOGENOM" id="CLU_051402_0_2_6"/>
<dbReference type="OrthoDB" id="9801479at2"/>
<dbReference type="GO" id="GO:0016020">
    <property type="term" value="C:membrane"/>
    <property type="evidence" value="ECO:0007669"/>
    <property type="project" value="TreeGrafter"/>
</dbReference>
<dbReference type="GO" id="GO:0050660">
    <property type="term" value="F:flavin adenine dinucleotide binding"/>
    <property type="evidence" value="ECO:0007669"/>
    <property type="project" value="UniProtKB-UniRule"/>
</dbReference>
<dbReference type="GO" id="GO:0010181">
    <property type="term" value="F:FMN binding"/>
    <property type="evidence" value="ECO:0007669"/>
    <property type="project" value="InterPro"/>
</dbReference>
<dbReference type="GO" id="GO:0051287">
    <property type="term" value="F:NAD binding"/>
    <property type="evidence" value="ECO:0007669"/>
    <property type="project" value="UniProtKB-UniRule"/>
</dbReference>
<dbReference type="GO" id="GO:0050136">
    <property type="term" value="F:NADH:ubiquinone reductase (non-electrogenic) activity"/>
    <property type="evidence" value="ECO:0007669"/>
    <property type="project" value="RHEA"/>
</dbReference>
<dbReference type="GO" id="GO:0050661">
    <property type="term" value="F:NADP binding"/>
    <property type="evidence" value="ECO:0007669"/>
    <property type="project" value="UniProtKB-UniRule"/>
</dbReference>
<dbReference type="GO" id="GO:0008753">
    <property type="term" value="F:NADPH dehydrogenase (quinone) activity"/>
    <property type="evidence" value="ECO:0007669"/>
    <property type="project" value="RHEA"/>
</dbReference>
<dbReference type="FunFam" id="3.40.50.360:FF:000001">
    <property type="entry name" value="NAD(P)H dehydrogenase (Quinone) FQR1-like"/>
    <property type="match status" value="1"/>
</dbReference>
<dbReference type="Gene3D" id="3.40.50.360">
    <property type="match status" value="1"/>
</dbReference>
<dbReference type="HAMAP" id="MF_01017">
    <property type="entry name" value="NQOR"/>
    <property type="match status" value="1"/>
</dbReference>
<dbReference type="InterPro" id="IPR008254">
    <property type="entry name" value="Flavodoxin/NO_synth"/>
</dbReference>
<dbReference type="InterPro" id="IPR029039">
    <property type="entry name" value="Flavoprotein-like_sf"/>
</dbReference>
<dbReference type="InterPro" id="IPR010089">
    <property type="entry name" value="Flavoprotein_WrbA-like"/>
</dbReference>
<dbReference type="InterPro" id="IPR005025">
    <property type="entry name" value="FMN_Rdtase-like_dom"/>
</dbReference>
<dbReference type="InterPro" id="IPR037513">
    <property type="entry name" value="NQO"/>
</dbReference>
<dbReference type="NCBIfam" id="TIGR01755">
    <property type="entry name" value="flav_wrbA"/>
    <property type="match status" value="1"/>
</dbReference>
<dbReference type="NCBIfam" id="NF002999">
    <property type="entry name" value="PRK03767.1"/>
    <property type="match status" value="1"/>
</dbReference>
<dbReference type="PANTHER" id="PTHR30546">
    <property type="entry name" value="FLAVODOXIN-RELATED PROTEIN WRBA-RELATED"/>
    <property type="match status" value="1"/>
</dbReference>
<dbReference type="PANTHER" id="PTHR30546:SF23">
    <property type="entry name" value="FLAVOPROTEIN-LIKE PROTEIN YCP4-RELATED"/>
    <property type="match status" value="1"/>
</dbReference>
<dbReference type="Pfam" id="PF03358">
    <property type="entry name" value="FMN_red"/>
    <property type="match status" value="1"/>
</dbReference>
<dbReference type="SUPFAM" id="SSF52218">
    <property type="entry name" value="Flavoproteins"/>
    <property type="match status" value="1"/>
</dbReference>
<dbReference type="PROSITE" id="PS50902">
    <property type="entry name" value="FLAVODOXIN_LIKE"/>
    <property type="match status" value="1"/>
</dbReference>
<name>NQOR_HYDCU</name>
<organism>
    <name type="scientific">Hydrogenovibrio crunogenus (strain DSM 25203 / XCL-2)</name>
    <name type="common">Thiomicrospira crunogena</name>
    <dbReference type="NCBI Taxonomy" id="317025"/>
    <lineage>
        <taxon>Bacteria</taxon>
        <taxon>Pseudomonadati</taxon>
        <taxon>Pseudomonadota</taxon>
        <taxon>Gammaproteobacteria</taxon>
        <taxon>Thiotrichales</taxon>
        <taxon>Piscirickettsiaceae</taxon>
        <taxon>Hydrogenovibrio</taxon>
    </lineage>
</organism>
<protein>
    <recommendedName>
        <fullName evidence="1">NAD(P)H dehydrogenase (quinone)</fullName>
        <ecNumber evidence="1">1.6.5.2</ecNumber>
    </recommendedName>
    <alternativeName>
        <fullName>Flavoprotein WrbA</fullName>
    </alternativeName>
    <alternativeName>
        <fullName evidence="1">NAD(P)H:quinone oxidoreductase</fullName>
        <shortName evidence="1">NQO</shortName>
    </alternativeName>
</protein>
<feature type="chain" id="PRO_0000291035" description="NAD(P)H dehydrogenase (quinone)">
    <location>
        <begin position="1"/>
        <end position="201"/>
    </location>
</feature>
<feature type="domain" description="Flavodoxin-like" evidence="1">
    <location>
        <begin position="4"/>
        <end position="191"/>
    </location>
</feature>
<feature type="binding site" evidence="1">
    <location>
        <begin position="10"/>
        <end position="15"/>
    </location>
    <ligand>
        <name>FMN</name>
        <dbReference type="ChEBI" id="CHEBI:58210"/>
    </ligand>
</feature>
<feature type="binding site" evidence="1">
    <location>
        <position position="12"/>
    </location>
    <ligand>
        <name>NAD(+)</name>
        <dbReference type="ChEBI" id="CHEBI:57540"/>
    </ligand>
</feature>
<feature type="binding site" evidence="1">
    <location>
        <begin position="79"/>
        <end position="81"/>
    </location>
    <ligand>
        <name>FMN</name>
        <dbReference type="ChEBI" id="CHEBI:58210"/>
    </ligand>
</feature>
<feature type="binding site" evidence="1">
    <location>
        <position position="99"/>
    </location>
    <ligand>
        <name>substrate</name>
    </ligand>
</feature>
<feature type="binding site" evidence="1">
    <location>
        <begin position="114"/>
        <end position="120"/>
    </location>
    <ligand>
        <name>FMN</name>
        <dbReference type="ChEBI" id="CHEBI:58210"/>
    </ligand>
</feature>
<feature type="binding site" evidence="1">
    <location>
        <position position="135"/>
    </location>
    <ligand>
        <name>FMN</name>
        <dbReference type="ChEBI" id="CHEBI:58210"/>
    </ligand>
</feature>
<accession>Q31GW8</accession>
<reference key="1">
    <citation type="journal article" date="2006" name="PLoS Biol.">
        <title>The genome of deep-sea vent chemolithoautotroph Thiomicrospira crunogena XCL-2.</title>
        <authorList>
            <person name="Scott K.M."/>
            <person name="Sievert S.M."/>
            <person name="Abril F.N."/>
            <person name="Ball L.A."/>
            <person name="Barrett C.J."/>
            <person name="Blake R.A."/>
            <person name="Boller A.J."/>
            <person name="Chain P.S.G."/>
            <person name="Clark J.A."/>
            <person name="Davis C.R."/>
            <person name="Detter C."/>
            <person name="Do K.F."/>
            <person name="Dobrinski K.P."/>
            <person name="Faza B.I."/>
            <person name="Fitzpatrick K.A."/>
            <person name="Freyermuth S.K."/>
            <person name="Harmer T.L."/>
            <person name="Hauser L.J."/>
            <person name="Huegler M."/>
            <person name="Kerfeld C.A."/>
            <person name="Klotz M.G."/>
            <person name="Kong W.W."/>
            <person name="Land M."/>
            <person name="Lapidus A."/>
            <person name="Larimer F.W."/>
            <person name="Longo D.L."/>
            <person name="Lucas S."/>
            <person name="Malfatti S.A."/>
            <person name="Massey S.E."/>
            <person name="Martin D.D."/>
            <person name="McCuddin Z."/>
            <person name="Meyer F."/>
            <person name="Moore J.L."/>
            <person name="Ocampo L.H. Jr."/>
            <person name="Paul J.H."/>
            <person name="Paulsen I.T."/>
            <person name="Reep D.K."/>
            <person name="Ren Q."/>
            <person name="Ross R.L."/>
            <person name="Sato P.Y."/>
            <person name="Thomas P."/>
            <person name="Tinkham L.E."/>
            <person name="Zeruth G.T."/>
        </authorList>
    </citation>
    <scope>NUCLEOTIDE SEQUENCE [LARGE SCALE GENOMIC DNA]</scope>
    <source>
        <strain>DSM 25203 / XCL-2</strain>
    </source>
</reference>
<gene>
    <name type="ordered locus">Tcr_1010</name>
</gene>
<comment type="catalytic activity">
    <reaction evidence="1">
        <text>a quinone + NADH + H(+) = a quinol + NAD(+)</text>
        <dbReference type="Rhea" id="RHEA:46160"/>
        <dbReference type="ChEBI" id="CHEBI:15378"/>
        <dbReference type="ChEBI" id="CHEBI:24646"/>
        <dbReference type="ChEBI" id="CHEBI:57540"/>
        <dbReference type="ChEBI" id="CHEBI:57945"/>
        <dbReference type="ChEBI" id="CHEBI:132124"/>
        <dbReference type="EC" id="1.6.5.2"/>
    </reaction>
</comment>
<comment type="catalytic activity">
    <reaction evidence="1">
        <text>a quinone + NADPH + H(+) = a quinol + NADP(+)</text>
        <dbReference type="Rhea" id="RHEA:46164"/>
        <dbReference type="ChEBI" id="CHEBI:15378"/>
        <dbReference type="ChEBI" id="CHEBI:24646"/>
        <dbReference type="ChEBI" id="CHEBI:57783"/>
        <dbReference type="ChEBI" id="CHEBI:58349"/>
        <dbReference type="ChEBI" id="CHEBI:132124"/>
        <dbReference type="EC" id="1.6.5.2"/>
    </reaction>
</comment>
<comment type="cofactor">
    <cofactor evidence="1">
        <name>FMN</name>
        <dbReference type="ChEBI" id="CHEBI:58210"/>
    </cofactor>
    <text evidence="1">Binds 1 FMN per monomer.</text>
</comment>
<comment type="similarity">
    <text evidence="1">Belongs to the WrbA family.</text>
</comment>
<proteinExistence type="inferred from homology"/>
<evidence type="ECO:0000255" key="1">
    <source>
        <dbReference type="HAMAP-Rule" id="MF_01017"/>
    </source>
</evidence>
<sequence length="201" mass="21360">MTKVLVLYYSMYGHVETMAKAIAEGAGSVEGVEVTIKRVPELMTDEQAKKAGVKLDQSAPIATPSELADYDAIIFGTPTRFGNMCAQMRNFLDQTGGLWAGGKLINKVGSVFTSTGTQHGGQETTITSFHTNLFHYGMIVVGVPYSCQEMTNMNEITGGTPYGASTLAGGDGSRQPSENEIKIAKCQGVHVAKVAKKQSAS</sequence>